<accession>A9A9P7</accession>
<feature type="chain" id="PRO_1000134020" description="Large ribosomal subunit protein eL32">
    <location>
        <begin position="1"/>
        <end position="135"/>
    </location>
</feature>
<proteinExistence type="inferred from homology"/>
<reference key="1">
    <citation type="submission" date="2007-10" db="EMBL/GenBank/DDBJ databases">
        <title>Complete sequence of Methanococcus maripaludis C6.</title>
        <authorList>
            <consortium name="US DOE Joint Genome Institute"/>
            <person name="Copeland A."/>
            <person name="Lucas S."/>
            <person name="Lapidus A."/>
            <person name="Barry K."/>
            <person name="Glavina del Rio T."/>
            <person name="Dalin E."/>
            <person name="Tice H."/>
            <person name="Pitluck S."/>
            <person name="Clum A."/>
            <person name="Schmutz J."/>
            <person name="Larimer F."/>
            <person name="Land M."/>
            <person name="Hauser L."/>
            <person name="Kyrpides N."/>
            <person name="Mikhailova N."/>
            <person name="Sieprawska-Lupa M."/>
            <person name="Whitman W.B."/>
            <person name="Richardson P."/>
        </authorList>
    </citation>
    <scope>NUCLEOTIDE SEQUENCE [LARGE SCALE GENOMIC DNA]</scope>
    <source>
        <strain>C6 / ATCC BAA-1332</strain>
    </source>
</reference>
<sequence>MSEFKRLMRLKLKMKQKRPEFKRQDWFKSSRIGTSWRRPFGKHSGMRIGLTHRAAVATVGYRGPALVRGLHPSGLQDILVNNVKELVAINPEIQGARIAATVGKRKRIEIVKKANELGIRVFNVSKQKQEEFLSL</sequence>
<gene>
    <name evidence="1" type="primary">rpl32e</name>
    <name type="ordered locus">MmarC6_1257</name>
</gene>
<organism>
    <name type="scientific">Methanococcus maripaludis (strain C6 / ATCC BAA-1332)</name>
    <dbReference type="NCBI Taxonomy" id="444158"/>
    <lineage>
        <taxon>Archaea</taxon>
        <taxon>Methanobacteriati</taxon>
        <taxon>Methanobacteriota</taxon>
        <taxon>Methanomada group</taxon>
        <taxon>Methanococci</taxon>
        <taxon>Methanococcales</taxon>
        <taxon>Methanococcaceae</taxon>
        <taxon>Methanococcus</taxon>
    </lineage>
</organism>
<name>RL32_METM6</name>
<protein>
    <recommendedName>
        <fullName evidence="1">Large ribosomal subunit protein eL32</fullName>
    </recommendedName>
    <alternativeName>
        <fullName evidence="2">50S ribosomal protein L32e</fullName>
    </alternativeName>
</protein>
<comment type="similarity">
    <text evidence="1">Belongs to the eukaryotic ribosomal protein eL32 family.</text>
</comment>
<keyword id="KW-0687">Ribonucleoprotein</keyword>
<keyword id="KW-0689">Ribosomal protein</keyword>
<evidence type="ECO:0000255" key="1">
    <source>
        <dbReference type="HAMAP-Rule" id="MF_00810"/>
    </source>
</evidence>
<evidence type="ECO:0000305" key="2"/>
<dbReference type="EMBL" id="CP000867">
    <property type="protein sequence ID" value="ABX02070.1"/>
    <property type="molecule type" value="Genomic_DNA"/>
</dbReference>
<dbReference type="SMR" id="A9A9P7"/>
<dbReference type="STRING" id="444158.MmarC6_1257"/>
<dbReference type="KEGG" id="mmx:MmarC6_1257"/>
<dbReference type="eggNOG" id="arCOG00781">
    <property type="taxonomic scope" value="Archaea"/>
</dbReference>
<dbReference type="HOGENOM" id="CLU_071479_3_1_2"/>
<dbReference type="OrthoDB" id="372100at2157"/>
<dbReference type="PhylomeDB" id="A9A9P7"/>
<dbReference type="GO" id="GO:0022625">
    <property type="term" value="C:cytosolic large ribosomal subunit"/>
    <property type="evidence" value="ECO:0007669"/>
    <property type="project" value="TreeGrafter"/>
</dbReference>
<dbReference type="GO" id="GO:0003735">
    <property type="term" value="F:structural constituent of ribosome"/>
    <property type="evidence" value="ECO:0007669"/>
    <property type="project" value="InterPro"/>
</dbReference>
<dbReference type="GO" id="GO:0006412">
    <property type="term" value="P:translation"/>
    <property type="evidence" value="ECO:0007669"/>
    <property type="project" value="UniProtKB-UniRule"/>
</dbReference>
<dbReference type="CDD" id="cd00513">
    <property type="entry name" value="Ribosomal_L32_L32e"/>
    <property type="match status" value="1"/>
</dbReference>
<dbReference type="HAMAP" id="MF_00810">
    <property type="entry name" value="Ribosomal_eL32"/>
    <property type="match status" value="1"/>
</dbReference>
<dbReference type="InterPro" id="IPR001515">
    <property type="entry name" value="Ribosomal_eL32"/>
</dbReference>
<dbReference type="InterPro" id="IPR023654">
    <property type="entry name" value="Ribosomal_eL32_arc"/>
</dbReference>
<dbReference type="InterPro" id="IPR018263">
    <property type="entry name" value="Ribosomal_eL32_CS"/>
</dbReference>
<dbReference type="InterPro" id="IPR036351">
    <property type="entry name" value="Ribosomal_eL32_sf"/>
</dbReference>
<dbReference type="NCBIfam" id="NF006332">
    <property type="entry name" value="PRK08562.1"/>
    <property type="match status" value="1"/>
</dbReference>
<dbReference type="PANTHER" id="PTHR23413">
    <property type="entry name" value="60S RIBOSOMAL PROTEIN L32 AND DNA-DIRECTED RNA POLYMERASE II, SUBUNIT N"/>
    <property type="match status" value="1"/>
</dbReference>
<dbReference type="PANTHER" id="PTHR23413:SF1">
    <property type="entry name" value="RIBOSOMAL PROTEIN L32"/>
    <property type="match status" value="1"/>
</dbReference>
<dbReference type="Pfam" id="PF01655">
    <property type="entry name" value="Ribosomal_L32e"/>
    <property type="match status" value="1"/>
</dbReference>
<dbReference type="SMART" id="SM01393">
    <property type="entry name" value="Ribosomal_L32e"/>
    <property type="match status" value="1"/>
</dbReference>
<dbReference type="SUPFAM" id="SSF52042">
    <property type="entry name" value="Ribosomal protein L32e"/>
    <property type="match status" value="1"/>
</dbReference>
<dbReference type="PROSITE" id="PS00580">
    <property type="entry name" value="RIBOSOMAL_L32E"/>
    <property type="match status" value="1"/>
</dbReference>